<proteinExistence type="inferred from homology"/>
<protein>
    <recommendedName>
        <fullName evidence="1">UPF0145 protein STH1265</fullName>
    </recommendedName>
</protein>
<feature type="chain" id="PRO_0000225850" description="UPF0145 protein STH1265">
    <location>
        <begin position="1"/>
        <end position="104"/>
    </location>
</feature>
<keyword id="KW-1185">Reference proteome</keyword>
<organism>
    <name type="scientific">Symbiobacterium thermophilum (strain DSM 24528 / JCM 14929 / IAM 14863 / T)</name>
    <dbReference type="NCBI Taxonomy" id="292459"/>
    <lineage>
        <taxon>Bacteria</taxon>
        <taxon>Bacillati</taxon>
        <taxon>Bacillota</taxon>
        <taxon>Clostridia</taxon>
        <taxon>Eubacteriales</taxon>
        <taxon>Symbiobacteriaceae</taxon>
        <taxon>Symbiobacterium</taxon>
    </lineage>
</organism>
<sequence>MIVTTTPSVEGRQIAEYLGIVSAEAIMGANFFRDLAASITDLIGGRAGSYESKLREGREECLRELVAEAARLGADAVVGVDIDYEVVGESMLMVTASGTAVRLR</sequence>
<name>Y1265_SYMTH</name>
<gene>
    <name type="ordered locus">STH1265</name>
</gene>
<accession>Q67PZ3</accession>
<comment type="similarity">
    <text evidence="1">Belongs to the UPF0145 family.</text>
</comment>
<evidence type="ECO:0000255" key="1">
    <source>
        <dbReference type="HAMAP-Rule" id="MF_00338"/>
    </source>
</evidence>
<reference key="1">
    <citation type="journal article" date="2004" name="Nucleic Acids Res.">
        <title>Genome sequence of Symbiobacterium thermophilum, an uncultivable bacterium that depends on microbial commensalism.</title>
        <authorList>
            <person name="Ueda K."/>
            <person name="Yamashita A."/>
            <person name="Ishikawa J."/>
            <person name="Shimada M."/>
            <person name="Watsuji T."/>
            <person name="Morimura K."/>
            <person name="Ikeda H."/>
            <person name="Hattori M."/>
            <person name="Beppu T."/>
        </authorList>
    </citation>
    <scope>NUCLEOTIDE SEQUENCE [LARGE SCALE GENOMIC DNA]</scope>
    <source>
        <strain>DSM 24528 / JCM 14929 / IAM 14863 / T</strain>
    </source>
</reference>
<dbReference type="EMBL" id="AP006840">
    <property type="protein sequence ID" value="BAD40250.1"/>
    <property type="molecule type" value="Genomic_DNA"/>
</dbReference>
<dbReference type="RefSeq" id="WP_011195396.1">
    <property type="nucleotide sequence ID" value="NC_006177.1"/>
</dbReference>
<dbReference type="SMR" id="Q67PZ3"/>
<dbReference type="STRING" id="292459.STH1265"/>
<dbReference type="KEGG" id="sth:STH1265"/>
<dbReference type="eggNOG" id="COG0393">
    <property type="taxonomic scope" value="Bacteria"/>
</dbReference>
<dbReference type="HOGENOM" id="CLU_117144_3_2_9"/>
<dbReference type="OrthoDB" id="9796448at2"/>
<dbReference type="Proteomes" id="UP000000417">
    <property type="component" value="Chromosome"/>
</dbReference>
<dbReference type="Gene3D" id="3.30.110.70">
    <property type="entry name" value="Hypothetical protein apc22750. Chain B"/>
    <property type="match status" value="1"/>
</dbReference>
<dbReference type="HAMAP" id="MF_00338">
    <property type="entry name" value="UPF0145"/>
    <property type="match status" value="1"/>
</dbReference>
<dbReference type="InterPro" id="IPR035439">
    <property type="entry name" value="UPF0145_dom_sf"/>
</dbReference>
<dbReference type="InterPro" id="IPR002765">
    <property type="entry name" value="UPF0145_YbjQ-like"/>
</dbReference>
<dbReference type="PANTHER" id="PTHR34068">
    <property type="entry name" value="UPF0145 PROTEIN YBJQ"/>
    <property type="match status" value="1"/>
</dbReference>
<dbReference type="PANTHER" id="PTHR34068:SF1">
    <property type="entry name" value="UPF0145 PROTEIN YBJQ"/>
    <property type="match status" value="1"/>
</dbReference>
<dbReference type="Pfam" id="PF01906">
    <property type="entry name" value="YbjQ_1"/>
    <property type="match status" value="1"/>
</dbReference>
<dbReference type="SUPFAM" id="SSF117782">
    <property type="entry name" value="YbjQ-like"/>
    <property type="match status" value="1"/>
</dbReference>